<keyword id="KW-0067">ATP-binding</keyword>
<keyword id="KW-0175">Coiled coil</keyword>
<keyword id="KW-0963">Cytoplasm</keyword>
<keyword id="KW-0206">Cytoskeleton</keyword>
<keyword id="KW-0472">Membrane</keyword>
<keyword id="KW-0493">Microtubule</keyword>
<keyword id="KW-0505">Motor protein</keyword>
<keyword id="KW-0547">Nucleotide-binding</keyword>
<keyword id="KW-1185">Reference proteome</keyword>
<keyword id="KW-0812">Transmembrane</keyword>
<keyword id="KW-1133">Transmembrane helix</keyword>
<keyword id="KW-0813">Transport</keyword>
<proteinExistence type="evidence at transcript level"/>
<sequence>MDNNNNNFSTPKQPTINSTTGGQLRSRSNSSPSTSSISTPRNGSTTATTSSITNSIGKGSLVFSTMENAKKTLNMDSLSTPMSQSSKKRLSMNSSLLPPSSIPLPPSQQLSAKKDPSKRHSSFISTTTTTSLGSRPSTPQPNHTTNNNNNNNNGSNGNNVTSTNISSMLESNNSEILSQNQKVTLSTSSNTAFSSLPSSTNNGNNPLSNSGGGNGNHHLVNSNSSTSTPSPTMFISTTSPPPELSLMEGFNQHNLTTTTTTTTTTTNNTLNTSNGINSNSLSPSSHLNNGSNNNNNNNHLNLNNRSSSPSPTPSSSSISGRRTPIQNFNSVGGVNITSKTQPLFSDREESIQAVCRFRPETAAEQTLGPSEKQLTIGTDQTTIHITPTSSSSSSMAQAFRFSKVYQPNTTQESFYNEVGKPLIDNIVNGYNVGIIAYGQTGAGKTFSLGFSGGEGNDSYNSYCNRSEFYNNSHYLYGSQQQQQQQQLLPSSWGIMPRIIKDLFIKQDEQQSMNTPQRIKFTTKISYLEVYKEKVYDLLSEGGVNDIEIRMADGGFIVPDAVQSSIQTFTDFLTHLQHIEKNRKIAETKKNMASSRSHAIFIVSLLKEDLENKMTVTSLLYLVDLAGSESASKIDGTTSKIEETKSINKSLYALGGVIEDMSKNSKHVRYRDSKLTQLLQQCFGGNSKTCLIVNCSSSNHESVIRETIQSLNFGQRAQSVKNKPLQNVEESHSELKAKLRELNKDIETYKKFIEKISINSGVIPPSSVATYITQLQNACEELKKKNDRLQEDIINLEEENSDLPKKFNVLNKNNVSQIEILTQELELSKQINQEQLLKIEQYSQKYQATNEEIQKSFNHRQQLVNDLHDSNEKSKQLELKLKDALLNSKSESDEIRLKLTKALEESTDKDQRINTLESNKQKWKSKCNEVVRQSKELQDRLNILQSTYSNSVDSLSNSSLNNNNNESLEEIKKLKLNISSLTNQHIEREKSLQKEIDLARSKHTEQTLILKNLKTQIDTLTNKLEIQFPTIVNNNQQQQQSTQSSSSSSIESNLIISMNTIEVLFEKICKNQEQTNTIISTNVESIMGKLVEIDENEEFIRKEKDRERERAENLKNTLEDAQSNFLKQQEEIKQFIETQLKNKNNINNNNNIKNNNNNNKLKSKKVGSSSSSSSNIGSSICINILFFLIILVILFFLMVAVGLTIQNQDYNSQYRSSYFFKTT</sequence>
<reference key="1">
    <citation type="submission" date="2003-02" db="EMBL/GenBank/DDBJ databases">
        <title>Kinesin-related proteins from Dictyostelium.</title>
        <authorList>
            <person name="Suyama E."/>
            <person name="Sutoh K."/>
        </authorList>
    </citation>
    <scope>NUCLEOTIDE SEQUENCE [MRNA]</scope>
</reference>
<reference key="2">
    <citation type="journal article" date="2002" name="Nature">
        <title>Sequence and analysis of chromosome 2 of Dictyostelium discoideum.</title>
        <authorList>
            <person name="Gloeckner G."/>
            <person name="Eichinger L."/>
            <person name="Szafranski K."/>
            <person name="Pachebat J.A."/>
            <person name="Bankier A.T."/>
            <person name="Dear P.H."/>
            <person name="Lehmann R."/>
            <person name="Baumgart C."/>
            <person name="Parra G."/>
            <person name="Abril J.F."/>
            <person name="Guigo R."/>
            <person name="Kumpf K."/>
            <person name="Tunggal B."/>
            <person name="Cox E.C."/>
            <person name="Quail M.A."/>
            <person name="Platzer M."/>
            <person name="Rosenthal A."/>
            <person name="Noegel A.A."/>
        </authorList>
    </citation>
    <scope>NUCLEOTIDE SEQUENCE [LARGE SCALE GENOMIC DNA]</scope>
    <source>
        <strain>AX4</strain>
    </source>
</reference>
<reference key="3">
    <citation type="journal article" date="2005" name="Nature">
        <title>The genome of the social amoeba Dictyostelium discoideum.</title>
        <authorList>
            <person name="Eichinger L."/>
            <person name="Pachebat J.A."/>
            <person name="Gloeckner G."/>
            <person name="Rajandream M.A."/>
            <person name="Sucgang R."/>
            <person name="Berriman M."/>
            <person name="Song J."/>
            <person name="Olsen R."/>
            <person name="Szafranski K."/>
            <person name="Xu Q."/>
            <person name="Tunggal B."/>
            <person name="Kummerfeld S."/>
            <person name="Madera M."/>
            <person name="Konfortov B.A."/>
            <person name="Rivero F."/>
            <person name="Bankier A.T."/>
            <person name="Lehmann R."/>
            <person name="Hamlin N."/>
            <person name="Davies R."/>
            <person name="Gaudet P."/>
            <person name="Fey P."/>
            <person name="Pilcher K."/>
            <person name="Chen G."/>
            <person name="Saunders D."/>
            <person name="Sodergren E.J."/>
            <person name="Davis P."/>
            <person name="Kerhornou A."/>
            <person name="Nie X."/>
            <person name="Hall N."/>
            <person name="Anjard C."/>
            <person name="Hemphill L."/>
            <person name="Bason N."/>
            <person name="Farbrother P."/>
            <person name="Desany B."/>
            <person name="Just E."/>
            <person name="Morio T."/>
            <person name="Rost R."/>
            <person name="Churcher C.M."/>
            <person name="Cooper J."/>
            <person name="Haydock S."/>
            <person name="van Driessche N."/>
            <person name="Cronin A."/>
            <person name="Goodhead I."/>
            <person name="Muzny D.M."/>
            <person name="Mourier T."/>
            <person name="Pain A."/>
            <person name="Lu M."/>
            <person name="Harper D."/>
            <person name="Lindsay R."/>
            <person name="Hauser H."/>
            <person name="James K.D."/>
            <person name="Quiles M."/>
            <person name="Madan Babu M."/>
            <person name="Saito T."/>
            <person name="Buchrieser C."/>
            <person name="Wardroper A."/>
            <person name="Felder M."/>
            <person name="Thangavelu M."/>
            <person name="Johnson D."/>
            <person name="Knights A."/>
            <person name="Loulseged H."/>
            <person name="Mungall K.L."/>
            <person name="Oliver K."/>
            <person name="Price C."/>
            <person name="Quail M.A."/>
            <person name="Urushihara H."/>
            <person name="Hernandez J."/>
            <person name="Rabbinowitsch E."/>
            <person name="Steffen D."/>
            <person name="Sanders M."/>
            <person name="Ma J."/>
            <person name="Kohara Y."/>
            <person name="Sharp S."/>
            <person name="Simmonds M.N."/>
            <person name="Spiegler S."/>
            <person name="Tivey A."/>
            <person name="Sugano S."/>
            <person name="White B."/>
            <person name="Walker D."/>
            <person name="Woodward J.R."/>
            <person name="Winckler T."/>
            <person name="Tanaka Y."/>
            <person name="Shaulsky G."/>
            <person name="Schleicher M."/>
            <person name="Weinstock G.M."/>
            <person name="Rosenthal A."/>
            <person name="Cox E.C."/>
            <person name="Chisholm R.L."/>
            <person name="Gibbs R.A."/>
            <person name="Loomis W.F."/>
            <person name="Platzer M."/>
            <person name="Kay R.R."/>
            <person name="Williams J.G."/>
            <person name="Dear P.H."/>
            <person name="Noegel A.A."/>
            <person name="Barrell B.G."/>
            <person name="Kuspa A."/>
        </authorList>
    </citation>
    <scope>NUCLEOTIDE SEQUENCE [LARGE SCALE GENOMIC DNA]</scope>
    <source>
        <strain>AX4</strain>
    </source>
</reference>
<reference key="4">
    <citation type="journal article" date="2003" name="BMC Genomics">
        <title>Identification and phylogenetic analysis of Dictyostelium discoideum kinesin proteins.</title>
        <authorList>
            <person name="Kollmar M."/>
            <person name="Gloeckner G."/>
        </authorList>
    </citation>
    <scope>IDENTIFICATION</scope>
    <scope>NOMENCLATURE</scope>
</reference>
<name>KIF9_DICDI</name>
<gene>
    <name type="primary">kif9</name>
    <name type="synonym">kin2</name>
    <name type="ORF">DDB_G0274603</name>
</gene>
<organism>
    <name type="scientific">Dictyostelium discoideum</name>
    <name type="common">Social amoeba</name>
    <dbReference type="NCBI Taxonomy" id="44689"/>
    <lineage>
        <taxon>Eukaryota</taxon>
        <taxon>Amoebozoa</taxon>
        <taxon>Evosea</taxon>
        <taxon>Eumycetozoa</taxon>
        <taxon>Dictyostelia</taxon>
        <taxon>Dictyosteliales</taxon>
        <taxon>Dictyosteliaceae</taxon>
        <taxon>Dictyostelium</taxon>
    </lineage>
</organism>
<dbReference type="EMBL" id="AB102779">
    <property type="protein sequence ID" value="BAC56911.1"/>
    <property type="molecule type" value="mRNA"/>
</dbReference>
<dbReference type="EMBL" id="AAFI02000012">
    <property type="protein sequence ID" value="EAL70194.1"/>
    <property type="molecule type" value="Genomic_DNA"/>
</dbReference>
<dbReference type="RefSeq" id="XP_644079.1">
    <property type="nucleotide sequence ID" value="XM_638987.1"/>
</dbReference>
<dbReference type="SMR" id="Q555I8"/>
<dbReference type="FunCoup" id="Q555I8">
    <property type="interactions" value="3"/>
</dbReference>
<dbReference type="STRING" id="44689.Q555I8"/>
<dbReference type="TCDB" id="1.I.1.1.5">
    <property type="family name" value="the nuclear pore complex (npc) family"/>
</dbReference>
<dbReference type="GlyGen" id="Q555I8">
    <property type="glycosylation" value="2 sites"/>
</dbReference>
<dbReference type="PaxDb" id="44689-DDB0185204"/>
<dbReference type="EnsemblProtists" id="EAL70194">
    <property type="protein sequence ID" value="EAL70194"/>
    <property type="gene ID" value="DDB_G0274603"/>
</dbReference>
<dbReference type="GeneID" id="8619508"/>
<dbReference type="KEGG" id="ddi:DDB_G0274603"/>
<dbReference type="dictyBase" id="DDB_G0274603">
    <property type="gene designation" value="kif9"/>
</dbReference>
<dbReference type="VEuPathDB" id="AmoebaDB:DDB_G0274603"/>
<dbReference type="eggNOG" id="KOG0240">
    <property type="taxonomic scope" value="Eukaryota"/>
</dbReference>
<dbReference type="HOGENOM" id="CLU_268575_0_0_1"/>
<dbReference type="InParanoid" id="Q555I8"/>
<dbReference type="OMA" id="HDECEKI"/>
<dbReference type="PhylomeDB" id="Q555I8"/>
<dbReference type="PRO" id="PR:Q555I8"/>
<dbReference type="Proteomes" id="UP000002195">
    <property type="component" value="Chromosome 2"/>
</dbReference>
<dbReference type="GO" id="GO:0005737">
    <property type="term" value="C:cytoplasm"/>
    <property type="evidence" value="ECO:0000318"/>
    <property type="project" value="GO_Central"/>
</dbReference>
<dbReference type="GO" id="GO:0005871">
    <property type="term" value="C:kinesin complex"/>
    <property type="evidence" value="ECO:0000318"/>
    <property type="project" value="GO_Central"/>
</dbReference>
<dbReference type="GO" id="GO:0016020">
    <property type="term" value="C:membrane"/>
    <property type="evidence" value="ECO:0007669"/>
    <property type="project" value="UniProtKB-SubCell"/>
</dbReference>
<dbReference type="GO" id="GO:0005874">
    <property type="term" value="C:microtubule"/>
    <property type="evidence" value="ECO:0000318"/>
    <property type="project" value="GO_Central"/>
</dbReference>
<dbReference type="GO" id="GO:0005635">
    <property type="term" value="C:nuclear envelope"/>
    <property type="evidence" value="ECO:0000314"/>
    <property type="project" value="dictyBase"/>
</dbReference>
<dbReference type="GO" id="GO:0005524">
    <property type="term" value="F:ATP binding"/>
    <property type="evidence" value="ECO:0007669"/>
    <property type="project" value="UniProtKB-KW"/>
</dbReference>
<dbReference type="GO" id="GO:0016887">
    <property type="term" value="F:ATP hydrolysis activity"/>
    <property type="evidence" value="ECO:0000318"/>
    <property type="project" value="GO_Central"/>
</dbReference>
<dbReference type="GO" id="GO:0008017">
    <property type="term" value="F:microtubule binding"/>
    <property type="evidence" value="ECO:0000314"/>
    <property type="project" value="dictyBase"/>
</dbReference>
<dbReference type="GO" id="GO:0008574">
    <property type="term" value="F:plus-end-directed microtubule motor activity"/>
    <property type="evidence" value="ECO:0000318"/>
    <property type="project" value="GO_Central"/>
</dbReference>
<dbReference type="GO" id="GO:0007098">
    <property type="term" value="P:centrosome cycle"/>
    <property type="evidence" value="ECO:0000315"/>
    <property type="project" value="dictyBase"/>
</dbReference>
<dbReference type="GO" id="GO:0030705">
    <property type="term" value="P:cytoskeleton-dependent intracellular transport"/>
    <property type="evidence" value="ECO:0000318"/>
    <property type="project" value="GO_Central"/>
</dbReference>
<dbReference type="GO" id="GO:0051661">
    <property type="term" value="P:maintenance of centrosome location"/>
    <property type="evidence" value="ECO:0000315"/>
    <property type="project" value="dictyBase"/>
</dbReference>
<dbReference type="GO" id="GO:0007019">
    <property type="term" value="P:microtubule depolymerization"/>
    <property type="evidence" value="ECO:0000314"/>
    <property type="project" value="dictyBase"/>
</dbReference>
<dbReference type="GO" id="GO:0007018">
    <property type="term" value="P:microtubule-based movement"/>
    <property type="evidence" value="ECO:0000318"/>
    <property type="project" value="GO_Central"/>
</dbReference>
<dbReference type="GO" id="GO:0000278">
    <property type="term" value="P:mitotic cell cycle"/>
    <property type="evidence" value="ECO:0000315"/>
    <property type="project" value="dictyBase"/>
</dbReference>
<dbReference type="FunFam" id="3.40.850.10:FF:000199">
    <property type="entry name" value="Kinesin-like protein"/>
    <property type="match status" value="1"/>
</dbReference>
<dbReference type="Gene3D" id="3.40.850.10">
    <property type="entry name" value="Kinesin motor domain"/>
    <property type="match status" value="1"/>
</dbReference>
<dbReference type="InterPro" id="IPR027640">
    <property type="entry name" value="Kinesin-like_fam"/>
</dbReference>
<dbReference type="InterPro" id="IPR001752">
    <property type="entry name" value="Kinesin_motor_dom"/>
</dbReference>
<dbReference type="InterPro" id="IPR036961">
    <property type="entry name" value="Kinesin_motor_dom_sf"/>
</dbReference>
<dbReference type="InterPro" id="IPR027417">
    <property type="entry name" value="P-loop_NTPase"/>
</dbReference>
<dbReference type="PANTHER" id="PTHR47969">
    <property type="entry name" value="CHROMOSOME-ASSOCIATED KINESIN KIF4A-RELATED"/>
    <property type="match status" value="1"/>
</dbReference>
<dbReference type="PANTHER" id="PTHR47969:SF15">
    <property type="entry name" value="CHROMOSOME-ASSOCIATED KINESIN KIF4A-RELATED"/>
    <property type="match status" value="1"/>
</dbReference>
<dbReference type="Pfam" id="PF00225">
    <property type="entry name" value="Kinesin"/>
    <property type="match status" value="1"/>
</dbReference>
<dbReference type="PRINTS" id="PR00380">
    <property type="entry name" value="KINESINHEAVY"/>
</dbReference>
<dbReference type="SMART" id="SM00129">
    <property type="entry name" value="KISc"/>
    <property type="match status" value="1"/>
</dbReference>
<dbReference type="SUPFAM" id="SSF52540">
    <property type="entry name" value="P-loop containing nucleoside triphosphate hydrolases"/>
    <property type="match status" value="1"/>
</dbReference>
<dbReference type="PROSITE" id="PS50067">
    <property type="entry name" value="KINESIN_MOTOR_2"/>
    <property type="match status" value="1"/>
</dbReference>
<accession>Q555I8</accession>
<accession>Q86HL6</accession>
<accession>Q86SA4</accession>
<protein>
    <recommendedName>
        <fullName>Kinesin-related protein 9</fullName>
    </recommendedName>
    <alternativeName>
        <fullName>Kinesin family member 9</fullName>
    </alternativeName>
</protein>
<evidence type="ECO:0000250" key="1"/>
<evidence type="ECO:0000255" key="2"/>
<evidence type="ECO:0000255" key="3">
    <source>
        <dbReference type="PROSITE-ProRule" id="PRU00283"/>
    </source>
</evidence>
<evidence type="ECO:0000256" key="4">
    <source>
        <dbReference type="SAM" id="MobiDB-lite"/>
    </source>
</evidence>
<evidence type="ECO:0000305" key="5"/>
<comment type="function">
    <text evidence="1">Microtubule-associated force-producing protein that plays a role in organelle transport. Its motor activity is directed toward the microtubule's plus end (By similarity).</text>
</comment>
<comment type="subcellular location">
    <subcellularLocation>
        <location evidence="5">Membrane</location>
        <topology evidence="5">Single-pass membrane protein</topology>
    </subcellularLocation>
    <subcellularLocation>
        <location evidence="1">Cytoplasm</location>
        <location evidence="1">Cytoskeleton</location>
    </subcellularLocation>
</comment>
<comment type="similarity">
    <text evidence="3">Belongs to the TRAFAC class myosin-kinesin ATPase superfamily. Kinesin family.</text>
</comment>
<feature type="chain" id="PRO_0000365584" description="Kinesin-related protein 9">
    <location>
        <begin position="1"/>
        <end position="1222"/>
    </location>
</feature>
<feature type="transmembrane region" description="Helical" evidence="2">
    <location>
        <begin position="1183"/>
        <end position="1203"/>
    </location>
</feature>
<feature type="domain" description="Kinesin motor" evidence="3">
    <location>
        <begin position="350"/>
        <end position="719"/>
    </location>
</feature>
<feature type="region of interest" description="Disordered" evidence="4">
    <location>
        <begin position="1"/>
        <end position="55"/>
    </location>
</feature>
<feature type="region of interest" description="Disordered" evidence="4">
    <location>
        <begin position="75"/>
        <end position="165"/>
    </location>
</feature>
<feature type="region of interest" description="Disordered" evidence="4">
    <location>
        <begin position="188"/>
        <end position="343"/>
    </location>
</feature>
<feature type="region of interest" description="Disordered" evidence="4">
    <location>
        <begin position="1144"/>
        <end position="1174"/>
    </location>
</feature>
<feature type="coiled-coil region" evidence="2">
    <location>
        <begin position="724"/>
        <end position="1026"/>
    </location>
</feature>
<feature type="compositionally biased region" description="Polar residues" evidence="4">
    <location>
        <begin position="1"/>
        <end position="25"/>
    </location>
</feature>
<feature type="compositionally biased region" description="Low complexity" evidence="4">
    <location>
        <begin position="26"/>
        <end position="55"/>
    </location>
</feature>
<feature type="compositionally biased region" description="Polar residues" evidence="4">
    <location>
        <begin position="75"/>
        <end position="85"/>
    </location>
</feature>
<feature type="compositionally biased region" description="Low complexity" evidence="4">
    <location>
        <begin position="122"/>
        <end position="165"/>
    </location>
</feature>
<feature type="compositionally biased region" description="Low complexity" evidence="4">
    <location>
        <begin position="194"/>
        <end position="209"/>
    </location>
</feature>
<feature type="compositionally biased region" description="Low complexity" evidence="4">
    <location>
        <begin position="216"/>
        <end position="238"/>
    </location>
</feature>
<feature type="compositionally biased region" description="Low complexity" evidence="4">
    <location>
        <begin position="254"/>
        <end position="325"/>
    </location>
</feature>
<feature type="compositionally biased region" description="Polar residues" evidence="4">
    <location>
        <begin position="326"/>
        <end position="343"/>
    </location>
</feature>
<feature type="binding site" evidence="3">
    <location>
        <begin position="438"/>
        <end position="445"/>
    </location>
    <ligand>
        <name>ATP</name>
        <dbReference type="ChEBI" id="CHEBI:30616"/>
    </ligand>
</feature>
<feature type="sequence conflict" description="In Ref. 1; BAC56911." evidence="5" ref="1">
    <original>E</original>
    <variation>V</variation>
    <location>
        <position position="935"/>
    </location>
</feature>